<comment type="function">
    <text evidence="1 4 5">Histone demethylase that demethylates di-methylated 'Lys-4' of histone H3, a specific tag for epigenetic transcriptional activation, thereby acting as a corepressor (PubMed:34329293). Acts by oxidizing the substrate by FAD to generate the corresponding imine that is subsequently hydrolyzed (By similarity). Plays a role in the mitotic development of the germline (PubMed:34329293). May be involved in H3 demethylation in mitotic cells including gut and embryonic cells (PubMed:34329293). Plays a role in sensitivity upon interstrand cross-link DNA damage, probably by positively regulating the expression of mlh-1 (PubMed:34329293). Plays a role in developmental growth and lifespan regulation in response to ultraviolet-induced damage (PubMed:33046905). No obvious role in larval development, sex chromosome segregation or for regulating meiotic crossover frequency (PubMed:34329293).</text>
</comment>
<comment type="catalytic activity">
    <reaction evidence="7">
        <text>N(6),N(6)-dimethyl-L-lysyl(4)-[histone H3] + 2 A + 2 H2O = L-lysyl(4)-[histone H3] + 2 formaldehyde + 2 AH2</text>
        <dbReference type="Rhea" id="RHEA:60244"/>
        <dbReference type="Rhea" id="RHEA-COMP:15540"/>
        <dbReference type="Rhea" id="RHEA-COMP:15547"/>
        <dbReference type="ChEBI" id="CHEBI:13193"/>
        <dbReference type="ChEBI" id="CHEBI:15377"/>
        <dbReference type="ChEBI" id="CHEBI:16842"/>
        <dbReference type="ChEBI" id="CHEBI:17499"/>
        <dbReference type="ChEBI" id="CHEBI:29969"/>
        <dbReference type="ChEBI" id="CHEBI:61976"/>
        <dbReference type="EC" id="1.14.99.66"/>
    </reaction>
</comment>
<comment type="cofactor">
    <cofactor evidence="1">
        <name>FAD</name>
        <dbReference type="ChEBI" id="CHEBI:57692"/>
    </cofactor>
</comment>
<comment type="subcellular location">
    <subcellularLocation>
        <location evidence="5">Nucleus</location>
    </subcellularLocation>
    <text evidence="5">Only localizes to 5% of premeiotic tip and pachytene nuclei.</text>
</comment>
<comment type="tissue specificity">
    <text evidence="5">In hermaphrodites, expressed in gut cells, embryonic cells and sheath cells (PubMed:34329293). Not expressed in sperm or pharyngeal neurons (PubMed:34329293).</text>
</comment>
<comment type="disruption phenotype">
    <text evidence="5">Embryonic lethality in 2.7% of embryos and 17% reduction in brood size compared to wild type (PubMed:34329293). No larval arrest or high incidence of male phenotypes (PubMed:34329293). Disrupted mitotic progression characterized by a reduction in the length of the premeiotic tip which is where mitotically dividing nuclei are located in the germline, and furthermore the nuclei in this region are disorganized (PubMed:34329293). Increases methylation of 'Lys-4' of histone H3 in embryos, in premeiotic tip nuclei and pachytene nuclei (PubMed:34329293). Increases the expression of spr-5 in mitotic cells (PubMed:34329293). Reduces expression of mlh-1 (PubMed:34329293). Induces DNA damage response without exogenous DNA damage exposure by increasing the expression of DNA damage marker egl-1 and increasing the number of phosphorylated chk-1 foci in embryos, premeiotic tip-transition zone and pachytene nuclei (PubMed:34329293). Increases the numbers of rad-51 positive foci in nuclei in the late pachytene stage of meiosis and increases germ cell apoptosis (PubMed:34329293). Reduces sensitivity to interstrand cross-link DNA damage induced by cisplatin or nitrogen mustard (PubMed:34329293). Increased numbers of rad-51 positive foci in nuclei in gonads and chromosome fragmentation results at the premeiotic tip following exposure to nitrogen mustard (PubMed:34329293).</text>
</comment>
<comment type="similarity">
    <text evidence="6">Belongs to the flavin monoamine oxidase family.</text>
</comment>
<proteinExistence type="evidence at protein level"/>
<protein>
    <recommendedName>
        <fullName evidence="6">Lysine-specific histone demethylase 1B homolog</fullName>
        <ecNumber evidence="7">1.14.99.66</ecNumber>
    </recommendedName>
    <alternativeName>
        <fullName evidence="8">Amine oxidase family member 1</fullName>
    </alternativeName>
    <alternativeName>
        <fullName evidence="6">Flavin-containing amine oxidase domain-containing protein 1</fullName>
    </alternativeName>
    <alternativeName>
        <fullName evidence="6">Lysine-specific histone demethylase 2</fullName>
    </alternativeName>
</protein>
<dbReference type="EC" id="1.14.99.66" evidence="7"/>
<dbReference type="EMBL" id="BX284603">
    <property type="protein sequence ID" value="CAA84671.3"/>
    <property type="molecule type" value="Genomic_DNA"/>
</dbReference>
<dbReference type="PIR" id="T24218">
    <property type="entry name" value="T24218"/>
</dbReference>
<dbReference type="RefSeq" id="NP_497772.2">
    <property type="nucleotide sequence ID" value="NM_065371.7"/>
</dbReference>
<dbReference type="SMR" id="Q21988"/>
<dbReference type="BioGRID" id="40731">
    <property type="interactions" value="1"/>
</dbReference>
<dbReference type="FunCoup" id="Q21988">
    <property type="interactions" value="2025"/>
</dbReference>
<dbReference type="STRING" id="6239.R13G10.2.1"/>
<dbReference type="PaxDb" id="6239-R13G10.2"/>
<dbReference type="PeptideAtlas" id="Q21988"/>
<dbReference type="EnsemblMetazoa" id="R13G10.2.1">
    <property type="protein sequence ID" value="R13G10.2.1"/>
    <property type="gene ID" value="WBGene00000137"/>
</dbReference>
<dbReference type="GeneID" id="175493"/>
<dbReference type="KEGG" id="cel:CELE_R13G10.2"/>
<dbReference type="UCSC" id="R13G10.2">
    <property type="organism name" value="c. elegans"/>
</dbReference>
<dbReference type="AGR" id="WB:WBGene00000137"/>
<dbReference type="CTD" id="175493"/>
<dbReference type="WormBase" id="R13G10.2">
    <property type="protein sequence ID" value="CE41445"/>
    <property type="gene ID" value="WBGene00000137"/>
    <property type="gene designation" value="amx-1"/>
</dbReference>
<dbReference type="eggNOG" id="KOG0029">
    <property type="taxonomic scope" value="Eukaryota"/>
</dbReference>
<dbReference type="GeneTree" id="ENSGT00940000174336"/>
<dbReference type="HOGENOM" id="CLU_007885_0_0_1"/>
<dbReference type="InParanoid" id="Q21988"/>
<dbReference type="OMA" id="GEHFCNN"/>
<dbReference type="OrthoDB" id="2219495at2759"/>
<dbReference type="PhylomeDB" id="Q21988"/>
<dbReference type="Reactome" id="R-CEL-3214842">
    <property type="pathway name" value="HDMs demethylate histones"/>
</dbReference>
<dbReference type="PRO" id="PR:Q21988"/>
<dbReference type="Proteomes" id="UP000001940">
    <property type="component" value="Chromosome III"/>
</dbReference>
<dbReference type="Bgee" id="WBGene00000137">
    <property type="expression patterns" value="Expressed in embryo and 4 other cell types or tissues"/>
</dbReference>
<dbReference type="GO" id="GO:0005634">
    <property type="term" value="C:nucleus"/>
    <property type="evidence" value="ECO:0007669"/>
    <property type="project" value="UniProtKB-SubCell"/>
</dbReference>
<dbReference type="GO" id="GO:0140682">
    <property type="term" value="F:FAD-dependent H3K4me/H3K4me3 demethylase activity"/>
    <property type="evidence" value="ECO:0000316"/>
    <property type="project" value="WormBase"/>
</dbReference>
<dbReference type="GO" id="GO:0016491">
    <property type="term" value="F:oxidoreductase activity"/>
    <property type="evidence" value="ECO:0000318"/>
    <property type="project" value="GO_Central"/>
</dbReference>
<dbReference type="GO" id="GO:0006974">
    <property type="term" value="P:DNA damage response"/>
    <property type="evidence" value="ECO:0007669"/>
    <property type="project" value="UniProtKB-KW"/>
</dbReference>
<dbReference type="Gene3D" id="3.90.660.10">
    <property type="match status" value="1"/>
</dbReference>
<dbReference type="Gene3D" id="3.50.50.60">
    <property type="entry name" value="FAD/NAD(P)-binding domain"/>
    <property type="match status" value="1"/>
</dbReference>
<dbReference type="Gene3D" id="1.10.10.10">
    <property type="entry name" value="Winged helix-like DNA-binding domain superfamily/Winged helix DNA-binding domain"/>
    <property type="match status" value="1"/>
</dbReference>
<dbReference type="InterPro" id="IPR002937">
    <property type="entry name" value="Amino_oxidase"/>
</dbReference>
<dbReference type="InterPro" id="IPR036188">
    <property type="entry name" value="FAD/NAD-bd_sf"/>
</dbReference>
<dbReference type="InterPro" id="IPR050281">
    <property type="entry name" value="Flavin_monoamine_oxidase"/>
</dbReference>
<dbReference type="InterPro" id="IPR009057">
    <property type="entry name" value="Homeodomain-like_sf"/>
</dbReference>
<dbReference type="InterPro" id="IPR007526">
    <property type="entry name" value="SWIRM"/>
</dbReference>
<dbReference type="InterPro" id="IPR036388">
    <property type="entry name" value="WH-like_DNA-bd_sf"/>
</dbReference>
<dbReference type="PANTHER" id="PTHR10742">
    <property type="entry name" value="FLAVIN MONOAMINE OXIDASE"/>
    <property type="match status" value="1"/>
</dbReference>
<dbReference type="PANTHER" id="PTHR10742:SF410">
    <property type="entry name" value="LYSINE-SPECIFIC HISTONE DEMETHYLASE 2"/>
    <property type="match status" value="1"/>
</dbReference>
<dbReference type="Pfam" id="PF01593">
    <property type="entry name" value="Amino_oxidase"/>
    <property type="match status" value="1"/>
</dbReference>
<dbReference type="SUPFAM" id="SSF54373">
    <property type="entry name" value="FAD-linked reductases, C-terminal domain"/>
    <property type="match status" value="1"/>
</dbReference>
<dbReference type="SUPFAM" id="SSF51905">
    <property type="entry name" value="FAD/NAD(P)-binding domain"/>
    <property type="match status" value="1"/>
</dbReference>
<dbReference type="SUPFAM" id="SSF46689">
    <property type="entry name" value="Homeodomain-like"/>
    <property type="match status" value="1"/>
</dbReference>
<dbReference type="PROSITE" id="PS50934">
    <property type="entry name" value="SWIRM"/>
    <property type="match status" value="1"/>
</dbReference>
<evidence type="ECO:0000250" key="1">
    <source>
        <dbReference type="UniProtKB" id="Q8NB78"/>
    </source>
</evidence>
<evidence type="ECO:0000255" key="2">
    <source>
        <dbReference type="PROSITE-ProRule" id="PRU00247"/>
    </source>
</evidence>
<evidence type="ECO:0000256" key="3">
    <source>
        <dbReference type="SAM" id="MobiDB-lite"/>
    </source>
</evidence>
<evidence type="ECO:0000269" key="4">
    <source>
    </source>
</evidence>
<evidence type="ECO:0000269" key="5">
    <source>
    </source>
</evidence>
<evidence type="ECO:0000305" key="6"/>
<evidence type="ECO:0000305" key="7">
    <source>
    </source>
</evidence>
<evidence type="ECO:0000312" key="8">
    <source>
        <dbReference type="WormBase" id="R13G10.2"/>
    </source>
</evidence>
<reference key="1">
    <citation type="journal article" date="1998" name="Science">
        <title>Genome sequence of the nematode C. elegans: a platform for investigating biology.</title>
        <authorList>
            <consortium name="The C. elegans sequencing consortium"/>
        </authorList>
    </citation>
    <scope>NUCLEOTIDE SEQUENCE [LARGE SCALE GENOMIC DNA]</scope>
    <source>
        <strain>Bristol N2</strain>
    </source>
</reference>
<reference key="2">
    <citation type="journal article" date="2020" name="Nat. Struct. Mol. Biol.">
        <title>H3K4me2 regulates the recovery of protein biosynthesis and homeostasis following DNA damage.</title>
        <authorList>
            <person name="Wang S."/>
            <person name="Meyer D.H."/>
            <person name="Schumacher B."/>
        </authorList>
    </citation>
    <scope>FUNCTION</scope>
</reference>
<reference key="3">
    <citation type="journal article" date="2021" name="PLoS Genet.">
        <title>Histone demethylase AMX-1 is necessary for proper sensitivity to interstrand crosslink DNA damage.</title>
        <authorList>
            <person name="Zhang X."/>
            <person name="Tian S."/>
            <person name="Beese-Sims S.E."/>
            <person name="Chen J."/>
            <person name="Shin N."/>
            <person name="Colaiacovo M.P."/>
            <person name="Kim H.M."/>
        </authorList>
    </citation>
    <scope>FUNCTION</scope>
    <scope>CATALYTIC ACTIVITY</scope>
    <scope>SUBCELLULAR LOCATION</scope>
    <scope>TISSUE SPECIFICITY</scope>
    <scope>DISRUPTION PHENOTYPE</scope>
</reference>
<keyword id="KW-0227">DNA damage</keyword>
<keyword id="KW-0274">FAD</keyword>
<keyword id="KW-0285">Flavoprotein</keyword>
<keyword id="KW-0539">Nucleus</keyword>
<keyword id="KW-0560">Oxidoreductase</keyword>
<keyword id="KW-1185">Reference proteome</keyword>
<keyword id="KW-0804">Transcription</keyword>
<keyword id="KW-0805">Transcription regulation</keyword>
<name>KDM1B_CAEEL</name>
<gene>
    <name evidence="8" type="primary">amx-1</name>
    <name evidence="8" type="ORF">R13G10.2</name>
</gene>
<feature type="chain" id="PRO_0000099879" description="Lysine-specific histone demethylase 1B homolog">
    <location>
        <begin position="1"/>
        <end position="824"/>
    </location>
</feature>
<feature type="domain" description="SWIRM" evidence="2">
    <location>
        <begin position="245"/>
        <end position="346"/>
    </location>
</feature>
<feature type="region of interest" description="Disordered" evidence="3">
    <location>
        <begin position="1"/>
        <end position="31"/>
    </location>
</feature>
<feature type="binding site" evidence="1">
    <location>
        <begin position="352"/>
        <end position="407"/>
    </location>
    <ligand>
        <name>FAD</name>
        <dbReference type="ChEBI" id="CHEBI:57692"/>
    </ligand>
</feature>
<feature type="binding site" evidence="1">
    <location>
        <position position="579"/>
    </location>
    <ligand>
        <name>FAD</name>
        <dbReference type="ChEBI" id="CHEBI:57692"/>
    </ligand>
</feature>
<feature type="binding site" evidence="1">
    <location>
        <position position="788"/>
    </location>
    <ligand>
        <name>FAD</name>
        <dbReference type="ChEBI" id="CHEBI:57692"/>
    </ligand>
</feature>
<feature type="binding site" evidence="1">
    <location>
        <begin position="796"/>
        <end position="798"/>
    </location>
    <ligand>
        <name>FAD</name>
        <dbReference type="ChEBI" id="CHEBI:57692"/>
    </ligand>
</feature>
<sequence>MTTELEIDDRKEEEAQIPGETSESEEGDEPVKMNRVKRACAMAAESLKEAKRIKNMLMEEECVLQLGNCKKTASYGHRLSKTEACCPSCFSVAFRGKDYENEFTIWKQKAMDGQTHVRSEQFVKRYVNSCFLPYYAKCHQCSKYSKLITSDSLSAQQLSDFKCDCASTIESPKIERVREDSEWCFNEFGHPPLLQNNISYDLLVDHYVTRTTGMDATCQEKAALIDNGGIEFRDTRRIMNMFYVPFTDVIANIVHPEFMETDEKFAFPKFADDPISIYYLQVRNTIIAMWLKHPFVELTVKMIEPQIIVRGHARIFFIEHLIHPILEFLTIKGVVNYGAFDFRIDPLNGMRPKIAIIGAGISGISTARHLKHLGIDAVLFEAKDRFGGRMMDDQSLGVSVGKGAQIIVGNINNPITLLCEQIGIKYRNSNFFCPLIDENGRCFTLERKELDDQVDLHYNNVLDAIRNKYQSDRNFPDVPLEVTNFRHFTEMFSKMSSGLLSAADLDSLYTPEFEKLLDFHLGNLEFSCGTHVSNLSAKDYDHNEKFGNFAGEHAVITDGAQRIIDFLATGLDIRLNCPVKCIDWGRDDRKVKIFFENAEQAAEEFDKVVITTSLSVLKSNHSKMFVPPLPIEKQKAIDDLGAGLIEKIAVKFDRRFWDTVDADGLRTEYFGKVSDCKTDRSLFNIFYDFSGKDPNGEDTFVLMSYVTAEHVNLVNVLTESEVADKFCATLRKMFPSAVINPLGHMMSHWGADRFVGMSYTFVPFGSDGDATYNQLKKSIDEKLYFAGEHTIAAEPQTMAGAYISGLREAGQIVMSLKRDSATFE</sequence>
<accession>Q21988</accession>
<organism>
    <name type="scientific">Caenorhabditis elegans</name>
    <dbReference type="NCBI Taxonomy" id="6239"/>
    <lineage>
        <taxon>Eukaryota</taxon>
        <taxon>Metazoa</taxon>
        <taxon>Ecdysozoa</taxon>
        <taxon>Nematoda</taxon>
        <taxon>Chromadorea</taxon>
        <taxon>Rhabditida</taxon>
        <taxon>Rhabditina</taxon>
        <taxon>Rhabditomorpha</taxon>
        <taxon>Rhabditoidea</taxon>
        <taxon>Rhabditidae</taxon>
        <taxon>Peloderinae</taxon>
        <taxon>Caenorhabditis</taxon>
    </lineage>
</organism>